<keyword id="KW-0002">3D-structure</keyword>
<keyword id="KW-0025">Alternative splicing</keyword>
<keyword id="KW-0963">Cytoplasm</keyword>
<keyword id="KW-0967">Endosome</keyword>
<keyword id="KW-1017">Isopeptide bond</keyword>
<keyword id="KW-0472">Membrane</keyword>
<keyword id="KW-0479">Metal-binding</keyword>
<keyword id="KW-0597">Phosphoprotein</keyword>
<keyword id="KW-1267">Proteomics identification</keyword>
<keyword id="KW-1185">Reference proteome</keyword>
<keyword id="KW-0832">Ubl conjugation</keyword>
<keyword id="KW-0862">Zinc</keyword>
<keyword id="KW-0863">Zinc-finger</keyword>
<protein>
    <recommendedName>
        <fullName>Lateral signaling target protein 2 homolog</fullName>
        <shortName>hLst2</shortName>
    </recommendedName>
    <alternativeName>
        <fullName>Zinc finger FYVE domain-containing protein 28</fullName>
    </alternativeName>
</protein>
<dbReference type="EMBL" id="AB046863">
    <property type="protein sequence ID" value="BAB13469.1"/>
    <property type="status" value="ALT_INIT"/>
    <property type="molecule type" value="mRNA"/>
</dbReference>
<dbReference type="EMBL" id="AK126692">
    <property type="protein sequence ID" value="BAG54362.1"/>
    <property type="molecule type" value="mRNA"/>
</dbReference>
<dbReference type="EMBL" id="AK293775">
    <property type="protein sequence ID" value="BAH11593.1"/>
    <property type="molecule type" value="mRNA"/>
</dbReference>
<dbReference type="EMBL" id="AK294710">
    <property type="protein sequence ID" value="BAH11855.1"/>
    <property type="molecule type" value="mRNA"/>
</dbReference>
<dbReference type="EMBL" id="AK294874">
    <property type="protein sequence ID" value="BAH11908.1"/>
    <property type="molecule type" value="mRNA"/>
</dbReference>
<dbReference type="EMBL" id="AK316484">
    <property type="protein sequence ID" value="BAH14855.1"/>
    <property type="molecule type" value="mRNA"/>
</dbReference>
<dbReference type="EMBL" id="AL158068">
    <property type="status" value="NOT_ANNOTATED_CDS"/>
    <property type="molecule type" value="Genomic_DNA"/>
</dbReference>
<dbReference type="EMBL" id="AL645924">
    <property type="status" value="NOT_ANNOTATED_CDS"/>
    <property type="molecule type" value="Genomic_DNA"/>
</dbReference>
<dbReference type="EMBL" id="BC032605">
    <property type="status" value="NOT_ANNOTATED_CDS"/>
    <property type="molecule type" value="mRNA"/>
</dbReference>
<dbReference type="EMBL" id="BC035793">
    <property type="status" value="NOT_ANNOTATED_CDS"/>
    <property type="molecule type" value="mRNA"/>
</dbReference>
<dbReference type="EMBL" id="BC053664">
    <property type="protein sequence ID" value="AAH53664.1"/>
    <property type="status" value="ALT_INIT"/>
    <property type="molecule type" value="mRNA"/>
</dbReference>
<dbReference type="EMBL" id="BC137309">
    <property type="protein sequence ID" value="AAI37310.1"/>
    <property type="molecule type" value="mRNA"/>
</dbReference>
<dbReference type="EMBL" id="BC137310">
    <property type="protein sequence ID" value="AAI37311.1"/>
    <property type="molecule type" value="mRNA"/>
</dbReference>
<dbReference type="CCDS" id="CCDS33942.1">
    <molecule id="Q9HCC9-1"/>
</dbReference>
<dbReference type="CCDS" id="CCDS54708.1">
    <molecule id="Q9HCC9-3"/>
</dbReference>
<dbReference type="CCDS" id="CCDS54709.1">
    <molecule id="Q9HCC9-8"/>
</dbReference>
<dbReference type="CCDS" id="CCDS54710.1">
    <molecule id="Q9HCC9-7"/>
</dbReference>
<dbReference type="CCDS" id="CCDS54711.1">
    <molecule id="Q9HCC9-2"/>
</dbReference>
<dbReference type="CCDS" id="CCDS54712.1">
    <molecule id="Q9HCC9-6"/>
</dbReference>
<dbReference type="RefSeq" id="NP_001166127.1">
    <molecule id="Q9HCC9-2"/>
    <property type="nucleotide sequence ID" value="NM_001172656.2"/>
</dbReference>
<dbReference type="RefSeq" id="NP_001166128.1">
    <molecule id="Q9HCC9-6"/>
    <property type="nucleotide sequence ID" value="NM_001172657.2"/>
</dbReference>
<dbReference type="RefSeq" id="NP_001166129.1">
    <molecule id="Q9HCC9-7"/>
    <property type="nucleotide sequence ID" value="NM_001172658.3"/>
</dbReference>
<dbReference type="RefSeq" id="NP_001166130.1">
    <molecule id="Q9HCC9-3"/>
    <property type="nucleotide sequence ID" value="NM_001172659.2"/>
</dbReference>
<dbReference type="RefSeq" id="NP_001166131.1">
    <molecule id="Q9HCC9-8"/>
    <property type="nucleotide sequence ID" value="NM_001172660.3"/>
</dbReference>
<dbReference type="RefSeq" id="NP_066023.2">
    <molecule id="Q9HCC9-1"/>
    <property type="nucleotide sequence ID" value="NM_020972.3"/>
</dbReference>
<dbReference type="RefSeq" id="XP_016863994.1">
    <property type="nucleotide sequence ID" value="XM_017008505.1"/>
</dbReference>
<dbReference type="PDB" id="9F42">
    <property type="method" value="EM"/>
    <property type="resolution" value="3.27 A"/>
    <property type="chains" value="G=395-407"/>
</dbReference>
<dbReference type="PDB" id="9F43">
    <property type="method" value="EM"/>
    <property type="resolution" value="3.49 A"/>
    <property type="chains" value="G=1-887"/>
</dbReference>
<dbReference type="PDB" id="9F44">
    <property type="method" value="EM"/>
    <property type="resolution" value="3.68 A"/>
    <property type="chains" value="G/H=395-407"/>
</dbReference>
<dbReference type="PDB" id="9F45">
    <property type="method" value="EM"/>
    <property type="resolution" value="3.74 A"/>
    <property type="chains" value="G/H=1-887"/>
</dbReference>
<dbReference type="PDBsum" id="9F42"/>
<dbReference type="PDBsum" id="9F43"/>
<dbReference type="PDBsum" id="9F44"/>
<dbReference type="PDBsum" id="9F45"/>
<dbReference type="EMDB" id="EMD-50181"/>
<dbReference type="EMDB" id="EMD-50182"/>
<dbReference type="EMDB" id="EMD-50183"/>
<dbReference type="EMDB" id="EMD-50184"/>
<dbReference type="SMR" id="Q9HCC9"/>
<dbReference type="BioGRID" id="121752">
    <property type="interactions" value="8"/>
</dbReference>
<dbReference type="FunCoup" id="Q9HCC9">
    <property type="interactions" value="908"/>
</dbReference>
<dbReference type="IntAct" id="Q9HCC9">
    <property type="interactions" value="1"/>
</dbReference>
<dbReference type="STRING" id="9606.ENSP00000290974"/>
<dbReference type="GlyGen" id="Q9HCC9">
    <property type="glycosylation" value="1 site, 1 O-linked glycan (1 site)"/>
</dbReference>
<dbReference type="iPTMnet" id="Q9HCC9"/>
<dbReference type="PhosphoSitePlus" id="Q9HCC9"/>
<dbReference type="BioMuta" id="ZFYVE28"/>
<dbReference type="DMDM" id="251757462"/>
<dbReference type="jPOST" id="Q9HCC9"/>
<dbReference type="MassIVE" id="Q9HCC9"/>
<dbReference type="PaxDb" id="9606-ENSP00000290974"/>
<dbReference type="PeptideAtlas" id="Q9HCC9"/>
<dbReference type="ProteomicsDB" id="19146"/>
<dbReference type="ProteomicsDB" id="19155"/>
<dbReference type="ProteomicsDB" id="20260"/>
<dbReference type="ProteomicsDB" id="81671">
    <molecule id="Q9HCC9-1"/>
</dbReference>
<dbReference type="ProteomicsDB" id="81672">
    <molecule id="Q9HCC9-2"/>
</dbReference>
<dbReference type="ProteomicsDB" id="81673">
    <molecule id="Q9HCC9-3"/>
</dbReference>
<dbReference type="ProteomicsDB" id="81674">
    <molecule id="Q9HCC9-4"/>
</dbReference>
<dbReference type="ProteomicsDB" id="81675">
    <molecule id="Q9HCC9-5"/>
</dbReference>
<dbReference type="Antibodypedia" id="22351">
    <property type="antibodies" value="91 antibodies from 19 providers"/>
</dbReference>
<dbReference type="DNASU" id="57732"/>
<dbReference type="Ensembl" id="ENST00000290974.7">
    <molecule id="Q9HCC9-1"/>
    <property type="protein sequence ID" value="ENSP00000290974.3"/>
    <property type="gene ID" value="ENSG00000159733.14"/>
</dbReference>
<dbReference type="Ensembl" id="ENST00000503000.1">
    <molecule id="Q9HCC9-6"/>
    <property type="protein sequence ID" value="ENSP00000423694.1"/>
    <property type="gene ID" value="ENSG00000159733.14"/>
</dbReference>
<dbReference type="Ensembl" id="ENST00000509171.5">
    <molecule id="Q9HCC9-7"/>
    <property type="protein sequence ID" value="ENSP00000422638.1"/>
    <property type="gene ID" value="ENSG00000159733.14"/>
</dbReference>
<dbReference type="Ensembl" id="ENST00000511071.5">
    <molecule id="Q9HCC9-2"/>
    <property type="protein sequence ID" value="ENSP00000425706.1"/>
    <property type="gene ID" value="ENSG00000159733.14"/>
</dbReference>
<dbReference type="Ensembl" id="ENST00000515169.5">
    <molecule id="Q9HCC9-8"/>
    <property type="protein sequence ID" value="ENSP00000425766.1"/>
    <property type="gene ID" value="ENSG00000159733.14"/>
</dbReference>
<dbReference type="Ensembl" id="ENST00000515312.5">
    <molecule id="Q9HCC9-3"/>
    <property type="protein sequence ID" value="ENSP00000426299.1"/>
    <property type="gene ID" value="ENSG00000159733.14"/>
</dbReference>
<dbReference type="GeneID" id="57732"/>
<dbReference type="KEGG" id="hsa:57732"/>
<dbReference type="MANE-Select" id="ENST00000290974.7">
    <property type="protein sequence ID" value="ENSP00000290974.3"/>
    <property type="RefSeq nucleotide sequence ID" value="NM_020972.3"/>
    <property type="RefSeq protein sequence ID" value="NP_066023.2"/>
</dbReference>
<dbReference type="UCSC" id="uc003gex.3">
    <molecule id="Q9HCC9-1"/>
    <property type="organism name" value="human"/>
</dbReference>
<dbReference type="AGR" id="HGNC:29334"/>
<dbReference type="CTD" id="57732"/>
<dbReference type="DisGeNET" id="57732"/>
<dbReference type="GeneCards" id="ZFYVE28"/>
<dbReference type="HGNC" id="HGNC:29334">
    <property type="gene designation" value="ZFYVE28"/>
</dbReference>
<dbReference type="HPA" id="ENSG00000159733">
    <property type="expression patterns" value="Tissue enriched (brain)"/>
</dbReference>
<dbReference type="MIM" id="614176">
    <property type="type" value="gene"/>
</dbReference>
<dbReference type="neXtProt" id="NX_Q9HCC9"/>
<dbReference type="OpenTargets" id="ENSG00000159733"/>
<dbReference type="PharmGKB" id="PA134904138"/>
<dbReference type="VEuPathDB" id="HostDB:ENSG00000159733"/>
<dbReference type="eggNOG" id="KOG1819">
    <property type="taxonomic scope" value="Eukaryota"/>
</dbReference>
<dbReference type="GeneTree" id="ENSGT00940000157217"/>
<dbReference type="HOGENOM" id="CLU_007360_1_0_1"/>
<dbReference type="InParanoid" id="Q9HCC9"/>
<dbReference type="OMA" id="INPFSPC"/>
<dbReference type="OrthoDB" id="20035at2759"/>
<dbReference type="PAN-GO" id="Q9HCC9">
    <property type="GO annotations" value="2 GO annotations based on evolutionary models"/>
</dbReference>
<dbReference type="PhylomeDB" id="Q9HCC9"/>
<dbReference type="TreeFam" id="TF320752"/>
<dbReference type="PathwayCommons" id="Q9HCC9"/>
<dbReference type="SignaLink" id="Q9HCC9"/>
<dbReference type="BioGRID-ORCS" id="57732">
    <property type="hits" value="14 hits in 1158 CRISPR screens"/>
</dbReference>
<dbReference type="ChiTaRS" id="ZFYVE28">
    <property type="organism name" value="human"/>
</dbReference>
<dbReference type="GenomeRNAi" id="57732"/>
<dbReference type="Pharos" id="Q9HCC9">
    <property type="development level" value="Tbio"/>
</dbReference>
<dbReference type="PRO" id="PR:Q9HCC9"/>
<dbReference type="Proteomes" id="UP000005640">
    <property type="component" value="Chromosome 4"/>
</dbReference>
<dbReference type="RNAct" id="Q9HCC9">
    <property type="molecule type" value="protein"/>
</dbReference>
<dbReference type="Bgee" id="ENSG00000159733">
    <property type="expression patterns" value="Expressed in right hemisphere of cerebellum and 129 other cell types or tissues"/>
</dbReference>
<dbReference type="ExpressionAtlas" id="Q9HCC9">
    <property type="expression patterns" value="baseline and differential"/>
</dbReference>
<dbReference type="GO" id="GO:0005829">
    <property type="term" value="C:cytosol"/>
    <property type="evidence" value="ECO:0000314"/>
    <property type="project" value="UniProtKB"/>
</dbReference>
<dbReference type="GO" id="GO:0031901">
    <property type="term" value="C:early endosome membrane"/>
    <property type="evidence" value="ECO:0000314"/>
    <property type="project" value="UniProtKB"/>
</dbReference>
<dbReference type="GO" id="GO:0032266">
    <property type="term" value="F:phosphatidylinositol-3-phosphate binding"/>
    <property type="evidence" value="ECO:0000314"/>
    <property type="project" value="UniProtKB"/>
</dbReference>
<dbReference type="GO" id="GO:0008270">
    <property type="term" value="F:zinc ion binding"/>
    <property type="evidence" value="ECO:0007669"/>
    <property type="project" value="UniProtKB-KW"/>
</dbReference>
<dbReference type="GO" id="GO:0042059">
    <property type="term" value="P:negative regulation of epidermal growth factor receptor signaling pathway"/>
    <property type="evidence" value="ECO:0000315"/>
    <property type="project" value="UniProtKB"/>
</dbReference>
<dbReference type="GO" id="GO:0007175">
    <property type="term" value="P:negative regulation of epidermal growth factor-activated receptor activity"/>
    <property type="evidence" value="ECO:0000315"/>
    <property type="project" value="UniProtKB"/>
</dbReference>
<dbReference type="CDD" id="cd15731">
    <property type="entry name" value="FYVE_LST2"/>
    <property type="match status" value="1"/>
</dbReference>
<dbReference type="FunFam" id="3.30.40.10:FF:000092">
    <property type="entry name" value="Lateral signaling target protein 2 homolog"/>
    <property type="match status" value="1"/>
</dbReference>
<dbReference type="Gene3D" id="3.30.40.10">
    <property type="entry name" value="Zinc/RING finger domain, C3HC4 (zinc finger)"/>
    <property type="match status" value="1"/>
</dbReference>
<dbReference type="InterPro" id="IPR043269">
    <property type="entry name" value="FYVE_LST2"/>
</dbReference>
<dbReference type="InterPro" id="IPR051118">
    <property type="entry name" value="LST-2"/>
</dbReference>
<dbReference type="InterPro" id="IPR000306">
    <property type="entry name" value="Znf_FYVE"/>
</dbReference>
<dbReference type="InterPro" id="IPR017455">
    <property type="entry name" value="Znf_FYVE-rel"/>
</dbReference>
<dbReference type="InterPro" id="IPR011011">
    <property type="entry name" value="Znf_FYVE_PHD"/>
</dbReference>
<dbReference type="InterPro" id="IPR013083">
    <property type="entry name" value="Znf_RING/FYVE/PHD"/>
</dbReference>
<dbReference type="PANTHER" id="PTHR46465">
    <property type="entry name" value="LATERAL SIGNALING TARGET PROTEIN 2 HOMOLOG"/>
    <property type="match status" value="1"/>
</dbReference>
<dbReference type="PANTHER" id="PTHR46465:SF3">
    <property type="entry name" value="LATERAL SIGNALING TARGET PROTEIN 2 HOMOLOG"/>
    <property type="match status" value="1"/>
</dbReference>
<dbReference type="Pfam" id="PF01363">
    <property type="entry name" value="FYVE"/>
    <property type="match status" value="1"/>
</dbReference>
<dbReference type="SMART" id="SM00064">
    <property type="entry name" value="FYVE"/>
    <property type="match status" value="1"/>
</dbReference>
<dbReference type="SUPFAM" id="SSF57903">
    <property type="entry name" value="FYVE/PHD zinc finger"/>
    <property type="match status" value="1"/>
</dbReference>
<dbReference type="PROSITE" id="PS50178">
    <property type="entry name" value="ZF_FYVE"/>
    <property type="match status" value="1"/>
</dbReference>
<evidence type="ECO:0000255" key="1">
    <source>
        <dbReference type="PROSITE-ProRule" id="PRU00091"/>
    </source>
</evidence>
<evidence type="ECO:0000256" key="2">
    <source>
        <dbReference type="SAM" id="MobiDB-lite"/>
    </source>
</evidence>
<evidence type="ECO:0000269" key="3">
    <source>
    </source>
</evidence>
<evidence type="ECO:0000269" key="4">
    <source>
    </source>
</evidence>
<evidence type="ECO:0000269" key="5">
    <source>
    </source>
</evidence>
<evidence type="ECO:0000269" key="6">
    <source>
    </source>
</evidence>
<evidence type="ECO:0000303" key="7">
    <source>
    </source>
</evidence>
<evidence type="ECO:0000303" key="8">
    <source>
    </source>
</evidence>
<evidence type="ECO:0000305" key="9"/>
<evidence type="ECO:0007744" key="10">
    <source>
    </source>
</evidence>
<comment type="function">
    <text evidence="6">Negative regulator of epidermal growth factor receptor (EGFR) signaling. Acts by promoting EGFR degradation in endosomes when not monoubiquitinated.</text>
</comment>
<comment type="subunit">
    <text evidence="6">Interacts with TRIM3.</text>
</comment>
<comment type="subcellular location">
    <subcellularLocation>
        <location evidence="6">Cytoplasm</location>
        <location evidence="6">Cytosol</location>
    </subcellularLocation>
    <subcellularLocation>
        <location evidence="6">Early endosome membrane</location>
    </subcellularLocation>
    <text>Localizes to early endosome membrane in absence of Lys-87 monoubiquitination. Localizes to cytosol when monoubiquitinated.</text>
</comment>
<comment type="alternative products">
    <event type="alternative splicing"/>
    <isoform>
        <id>Q9HCC9-1</id>
        <name>1</name>
        <sequence type="displayed"/>
    </isoform>
    <isoform>
        <id>Q9HCC9-2</id>
        <name>2</name>
        <sequence type="described" ref="VSP_037616"/>
    </isoform>
    <isoform>
        <id>Q9HCC9-3</id>
        <name>3</name>
        <sequence type="described" ref="VSP_037615"/>
    </isoform>
    <isoform>
        <id>Q9HCC9-4</id>
        <name>4</name>
        <sequence type="described" ref="VSP_037615 VSP_037616"/>
    </isoform>
    <isoform>
        <id>Q9HCC9-5</id>
        <name>5</name>
        <sequence type="described" ref="VSP_037614"/>
    </isoform>
    <isoform>
        <id>Q9HCC9-6</id>
        <name>6</name>
        <sequence type="described" ref="VSP_045805 VSP_045806"/>
    </isoform>
    <isoform>
        <id>Q9HCC9-7</id>
        <name>7</name>
        <sequence type="described" ref="VSP_046092 VSP_046093 VSP_046094"/>
    </isoform>
    <isoform>
        <id>Q9HCC9-8</id>
        <name>8</name>
        <sequence type="described" ref="VSP_037615 VSP_046379"/>
    </isoform>
</comment>
<comment type="domain">
    <text evidence="6">The FYVE-type zinc finger mediates the interaction with phosphatidylinositol 3-phosphate (PI3P) and localization to early endosome membranes when not monoubiquitinated at Lys-87.</text>
</comment>
<comment type="PTM">
    <text>Monoubiquitination at Lys-87 prevents binding to phosphatidylinositol 3-phosphate (PI3P) and localization to early endosome membranes.</text>
</comment>
<comment type="similarity">
    <text evidence="9">Belongs to the lst-2 family.</text>
</comment>
<comment type="sequence caution" evidence="9">
    <conflict type="erroneous initiation">
        <sequence resource="EMBL-CDS" id="AAH53664"/>
    </conflict>
    <text>Truncated N-terminus.</text>
</comment>
<comment type="sequence caution" evidence="9">
    <conflict type="erroneous initiation">
        <sequence resource="EMBL-CDS" id="BAB13469"/>
    </conflict>
</comment>
<gene>
    <name type="primary">ZFYVE28</name>
    <name type="synonym">KIAA1643</name>
    <name type="synonym">LST2</name>
</gene>
<name>LST2_HUMAN</name>
<sequence>MMNRFRKWLYKPKRSDPQLLARFYYADEELNQVAAELDSLDGRKDPQRCTLLVSQFRSCQDNVLNIINQIMDECIPQDRAPRDFCVKFPEEIRHDNLAGQLWFGAECLAAGSIIMNRELESMAMRPLAKELTRSLEDVRGALRDQALRDLNTYTEKMREALRHFDVLFAEFELSYVSAMVPVKSPREYYVQQEVIVLFCETVERALDFGYLTQDMIDDYEPALMFSIPRLAIVCGLVVYADGPLNLDRKVEDMSELFRPFHTLLRKIRDLLQTLTEEELHTLERNLCISQDVEFPIRADVQGPAALAPALSAPLPPEGPLSAKAKDPDAELACSMQYDDQELEQLSRMVHRAGDEMSSLLSPPIACQSPAHRPGAEGSPGGEASPGRPRLRSGSDEEERVFFMDDVEGTAEALARPESPAGPFGWAGSTWADPQEKGQGGPGGAAGISLPASEKEEDLSNNNLEAEGTDGASLAGTSSCSCLDSRLHLDGWEVGADDAETAEMIAHRTGGMKLSATVIFNPKSPTSLDSAVATQEAASEPVAEGMDGGPHKLSTGATNCLLHSCVCCGSCGDSREDVVERLREKCSPGGVIGASYAAGLAKASDRAPERQEEAPPPSEDASNGREPKAPTSDKCLPHTSGSQVDTASGLQGEAGVAGQQEPEARELHAGSPSAHEAPQALSGSSSSTAGSCSSDKMGPEAAPAATHAAPQATREKIRSRFHGSHDLIHRLFVCISGVADQLQTNYASDLRSILKTLFEVMATKPETDDKEKLRKVTQTLRSAALEDCALCQETLSSSELAAKTRDGDFEDPPEWVPDEACGFCTACKAPFTVIRRKHHCRSCGKIFCSRCSSHSAPLPRYGQVKPVRVCTHCYMFHVTPFYSDKAGL</sequence>
<organism>
    <name type="scientific">Homo sapiens</name>
    <name type="common">Human</name>
    <dbReference type="NCBI Taxonomy" id="9606"/>
    <lineage>
        <taxon>Eukaryota</taxon>
        <taxon>Metazoa</taxon>
        <taxon>Chordata</taxon>
        <taxon>Craniata</taxon>
        <taxon>Vertebrata</taxon>
        <taxon>Euteleostomi</taxon>
        <taxon>Mammalia</taxon>
        <taxon>Eutheria</taxon>
        <taxon>Euarchontoglires</taxon>
        <taxon>Primates</taxon>
        <taxon>Haplorrhini</taxon>
        <taxon>Catarrhini</taxon>
        <taxon>Hominidae</taxon>
        <taxon>Homo</taxon>
    </lineage>
</organism>
<reference key="1">
    <citation type="journal article" date="2000" name="DNA Res.">
        <title>Prediction of the coding sequences of unidentified human genes. XVIII. The complete sequences of 100 new cDNA clones from brain which code for large proteins in vitro.</title>
        <authorList>
            <person name="Nagase T."/>
            <person name="Kikuno R."/>
            <person name="Nakayama M."/>
            <person name="Hirosawa M."/>
            <person name="Ohara O."/>
        </authorList>
    </citation>
    <scope>NUCLEOTIDE SEQUENCE [LARGE SCALE MRNA] (ISOFORM 1)</scope>
    <scope>VARIANT PRO-672</scope>
    <source>
        <tissue>Brain</tissue>
    </source>
</reference>
<reference key="2">
    <citation type="journal article" date="2004" name="Nat. Genet.">
        <title>Complete sequencing and characterization of 21,243 full-length human cDNAs.</title>
        <authorList>
            <person name="Ota T."/>
            <person name="Suzuki Y."/>
            <person name="Nishikawa T."/>
            <person name="Otsuki T."/>
            <person name="Sugiyama T."/>
            <person name="Irie R."/>
            <person name="Wakamatsu A."/>
            <person name="Hayashi K."/>
            <person name="Sato H."/>
            <person name="Nagai K."/>
            <person name="Kimura K."/>
            <person name="Makita H."/>
            <person name="Sekine M."/>
            <person name="Obayashi M."/>
            <person name="Nishi T."/>
            <person name="Shibahara T."/>
            <person name="Tanaka T."/>
            <person name="Ishii S."/>
            <person name="Yamamoto J."/>
            <person name="Saito K."/>
            <person name="Kawai Y."/>
            <person name="Isono Y."/>
            <person name="Nakamura Y."/>
            <person name="Nagahari K."/>
            <person name="Murakami K."/>
            <person name="Yasuda T."/>
            <person name="Iwayanagi T."/>
            <person name="Wagatsuma M."/>
            <person name="Shiratori A."/>
            <person name="Sudo H."/>
            <person name="Hosoiri T."/>
            <person name="Kaku Y."/>
            <person name="Kodaira H."/>
            <person name="Kondo H."/>
            <person name="Sugawara M."/>
            <person name="Takahashi M."/>
            <person name="Kanda K."/>
            <person name="Yokoi T."/>
            <person name="Furuya T."/>
            <person name="Kikkawa E."/>
            <person name="Omura Y."/>
            <person name="Abe K."/>
            <person name="Kamihara K."/>
            <person name="Katsuta N."/>
            <person name="Sato K."/>
            <person name="Tanikawa M."/>
            <person name="Yamazaki M."/>
            <person name="Ninomiya K."/>
            <person name="Ishibashi T."/>
            <person name="Yamashita H."/>
            <person name="Murakawa K."/>
            <person name="Fujimori K."/>
            <person name="Tanai H."/>
            <person name="Kimata M."/>
            <person name="Watanabe M."/>
            <person name="Hiraoka S."/>
            <person name="Chiba Y."/>
            <person name="Ishida S."/>
            <person name="Ono Y."/>
            <person name="Takiguchi S."/>
            <person name="Watanabe S."/>
            <person name="Yosida M."/>
            <person name="Hotuta T."/>
            <person name="Kusano J."/>
            <person name="Kanehori K."/>
            <person name="Takahashi-Fujii A."/>
            <person name="Hara H."/>
            <person name="Tanase T.-O."/>
            <person name="Nomura Y."/>
            <person name="Togiya S."/>
            <person name="Komai F."/>
            <person name="Hara R."/>
            <person name="Takeuchi K."/>
            <person name="Arita M."/>
            <person name="Imose N."/>
            <person name="Musashino K."/>
            <person name="Yuuki H."/>
            <person name="Oshima A."/>
            <person name="Sasaki N."/>
            <person name="Aotsuka S."/>
            <person name="Yoshikawa Y."/>
            <person name="Matsunawa H."/>
            <person name="Ichihara T."/>
            <person name="Shiohata N."/>
            <person name="Sano S."/>
            <person name="Moriya S."/>
            <person name="Momiyama H."/>
            <person name="Satoh N."/>
            <person name="Takami S."/>
            <person name="Terashima Y."/>
            <person name="Suzuki O."/>
            <person name="Nakagawa S."/>
            <person name="Senoh A."/>
            <person name="Mizoguchi H."/>
            <person name="Goto Y."/>
            <person name="Shimizu F."/>
            <person name="Wakebe H."/>
            <person name="Hishigaki H."/>
            <person name="Watanabe T."/>
            <person name="Sugiyama A."/>
            <person name="Takemoto M."/>
            <person name="Kawakami B."/>
            <person name="Yamazaki M."/>
            <person name="Watanabe K."/>
            <person name="Kumagai A."/>
            <person name="Itakura S."/>
            <person name="Fukuzumi Y."/>
            <person name="Fujimori Y."/>
            <person name="Komiyama M."/>
            <person name="Tashiro H."/>
            <person name="Tanigami A."/>
            <person name="Fujiwara T."/>
            <person name="Ono T."/>
            <person name="Yamada K."/>
            <person name="Fujii Y."/>
            <person name="Ozaki K."/>
            <person name="Hirao M."/>
            <person name="Ohmori Y."/>
            <person name="Kawabata A."/>
            <person name="Hikiji T."/>
            <person name="Kobatake N."/>
            <person name="Inagaki H."/>
            <person name="Ikema Y."/>
            <person name="Okamoto S."/>
            <person name="Okitani R."/>
            <person name="Kawakami T."/>
            <person name="Noguchi S."/>
            <person name="Itoh T."/>
            <person name="Shigeta K."/>
            <person name="Senba T."/>
            <person name="Matsumura K."/>
            <person name="Nakajima Y."/>
            <person name="Mizuno T."/>
            <person name="Morinaga M."/>
            <person name="Sasaki M."/>
            <person name="Togashi T."/>
            <person name="Oyama M."/>
            <person name="Hata H."/>
            <person name="Watanabe M."/>
            <person name="Komatsu T."/>
            <person name="Mizushima-Sugano J."/>
            <person name="Satoh T."/>
            <person name="Shirai Y."/>
            <person name="Takahashi Y."/>
            <person name="Nakagawa K."/>
            <person name="Okumura K."/>
            <person name="Nagase T."/>
            <person name="Nomura N."/>
            <person name="Kikuchi H."/>
            <person name="Masuho Y."/>
            <person name="Yamashita R."/>
            <person name="Nakai K."/>
            <person name="Yada T."/>
            <person name="Nakamura Y."/>
            <person name="Ohara O."/>
            <person name="Isogai T."/>
            <person name="Sugano S."/>
        </authorList>
    </citation>
    <scope>NUCLEOTIDE SEQUENCE [LARGE SCALE MRNA] (ISOFORMS 2; 3; 4 AND 5)</scope>
    <scope>VARIANTS ASN-603 AND PRO-672</scope>
    <source>
        <tissue>Brain</tissue>
        <tissue>Cerebellum</tissue>
        <tissue>Thymus</tissue>
    </source>
</reference>
<reference key="3">
    <citation type="journal article" date="2005" name="Nature">
        <title>Generation and annotation of the DNA sequences of human chromosomes 2 and 4.</title>
        <authorList>
            <person name="Hillier L.W."/>
            <person name="Graves T.A."/>
            <person name="Fulton R.S."/>
            <person name="Fulton L.A."/>
            <person name="Pepin K.H."/>
            <person name="Minx P."/>
            <person name="Wagner-McPherson C."/>
            <person name="Layman D."/>
            <person name="Wylie K."/>
            <person name="Sekhon M."/>
            <person name="Becker M.C."/>
            <person name="Fewell G.A."/>
            <person name="Delehaunty K.D."/>
            <person name="Miner T.L."/>
            <person name="Nash W.E."/>
            <person name="Kremitzki C."/>
            <person name="Oddy L."/>
            <person name="Du H."/>
            <person name="Sun H."/>
            <person name="Bradshaw-Cordum H."/>
            <person name="Ali J."/>
            <person name="Carter J."/>
            <person name="Cordes M."/>
            <person name="Harris A."/>
            <person name="Isak A."/>
            <person name="van Brunt A."/>
            <person name="Nguyen C."/>
            <person name="Du F."/>
            <person name="Courtney L."/>
            <person name="Kalicki J."/>
            <person name="Ozersky P."/>
            <person name="Abbott S."/>
            <person name="Armstrong J."/>
            <person name="Belter E.A."/>
            <person name="Caruso L."/>
            <person name="Cedroni M."/>
            <person name="Cotton M."/>
            <person name="Davidson T."/>
            <person name="Desai A."/>
            <person name="Elliott G."/>
            <person name="Erb T."/>
            <person name="Fronick C."/>
            <person name="Gaige T."/>
            <person name="Haakenson W."/>
            <person name="Haglund K."/>
            <person name="Holmes A."/>
            <person name="Harkins R."/>
            <person name="Kim K."/>
            <person name="Kruchowski S.S."/>
            <person name="Strong C.M."/>
            <person name="Grewal N."/>
            <person name="Goyea E."/>
            <person name="Hou S."/>
            <person name="Levy A."/>
            <person name="Martinka S."/>
            <person name="Mead K."/>
            <person name="McLellan M.D."/>
            <person name="Meyer R."/>
            <person name="Randall-Maher J."/>
            <person name="Tomlinson C."/>
            <person name="Dauphin-Kohlberg S."/>
            <person name="Kozlowicz-Reilly A."/>
            <person name="Shah N."/>
            <person name="Swearengen-Shahid S."/>
            <person name="Snider J."/>
            <person name="Strong J.T."/>
            <person name="Thompson J."/>
            <person name="Yoakum M."/>
            <person name="Leonard S."/>
            <person name="Pearman C."/>
            <person name="Trani L."/>
            <person name="Radionenko M."/>
            <person name="Waligorski J.E."/>
            <person name="Wang C."/>
            <person name="Rock S.M."/>
            <person name="Tin-Wollam A.-M."/>
            <person name="Maupin R."/>
            <person name="Latreille P."/>
            <person name="Wendl M.C."/>
            <person name="Yang S.-P."/>
            <person name="Pohl C."/>
            <person name="Wallis J.W."/>
            <person name="Spieth J."/>
            <person name="Bieri T.A."/>
            <person name="Berkowicz N."/>
            <person name="Nelson J.O."/>
            <person name="Osborne J."/>
            <person name="Ding L."/>
            <person name="Meyer R."/>
            <person name="Sabo A."/>
            <person name="Shotland Y."/>
            <person name="Sinha P."/>
            <person name="Wohldmann P.E."/>
            <person name="Cook L.L."/>
            <person name="Hickenbotham M.T."/>
            <person name="Eldred J."/>
            <person name="Williams D."/>
            <person name="Jones T.A."/>
            <person name="She X."/>
            <person name="Ciccarelli F.D."/>
            <person name="Izaurralde E."/>
            <person name="Taylor J."/>
            <person name="Schmutz J."/>
            <person name="Myers R.M."/>
            <person name="Cox D.R."/>
            <person name="Huang X."/>
            <person name="McPherson J.D."/>
            <person name="Mardis E.R."/>
            <person name="Clifton S.W."/>
            <person name="Warren W.C."/>
            <person name="Chinwalla A.T."/>
            <person name="Eddy S.R."/>
            <person name="Marra M.A."/>
            <person name="Ovcharenko I."/>
            <person name="Furey T.S."/>
            <person name="Miller W."/>
            <person name="Eichler E.E."/>
            <person name="Bork P."/>
            <person name="Suyama M."/>
            <person name="Torrents D."/>
            <person name="Waterston R.H."/>
            <person name="Wilson R.K."/>
        </authorList>
    </citation>
    <scope>NUCLEOTIDE SEQUENCE [LARGE SCALE GENOMIC DNA]</scope>
</reference>
<reference key="4">
    <citation type="journal article" date="2004" name="Genome Res.">
        <title>The status, quality, and expansion of the NIH full-length cDNA project: the Mammalian Gene Collection (MGC).</title>
        <authorList>
            <consortium name="The MGC Project Team"/>
        </authorList>
    </citation>
    <scope>NUCLEOTIDE SEQUENCE [LARGE SCALE MRNA] (ISOFORMS 1; 6; 7 AND 8)</scope>
    <scope>VARIANT PRO-672</scope>
    <source>
        <tissue>Leiomyosarcoma</tissue>
        <tissue>Ovary</tissue>
        <tissue>Pancreas</tissue>
    </source>
</reference>
<reference key="5">
    <citation type="journal article" date="2009" name="Dev. Cell">
        <title>Monoubiquitinylation regulates endosomal localization of Lst2, a negative regulator of EGF receptor signaling.</title>
        <authorList>
            <person name="Mosesson Y."/>
            <person name="Chetrit D."/>
            <person name="Schley L."/>
            <person name="Berghoff J."/>
            <person name="Ziv T."/>
            <person name="Carvalho S."/>
            <person name="Milanezi F."/>
            <person name="Admon A."/>
            <person name="Schmitt F."/>
            <person name="Ehrlich M."/>
            <person name="Yarden Y."/>
        </authorList>
    </citation>
    <scope>FUNCTION</scope>
    <scope>SUBCELLULAR LOCATION</scope>
    <scope>DOMAIN FYVE-TYPE ZINC-FINGER</scope>
    <scope>INTERACTION WITH TRIM3</scope>
    <scope>PHOSPHORYLATION AT SER-586 AND THR-870</scope>
    <scope>UBIQUITINATION AT LYS-87</scope>
    <scope>MUTAGENESIS OF LYS-87 AND CYS-823</scope>
</reference>
<reference key="6">
    <citation type="journal article" date="2013" name="J. Proteome Res.">
        <title>Toward a comprehensive characterization of a human cancer cell phosphoproteome.</title>
        <authorList>
            <person name="Zhou H."/>
            <person name="Di Palma S."/>
            <person name="Preisinger C."/>
            <person name="Peng M."/>
            <person name="Polat A.N."/>
            <person name="Heck A.J."/>
            <person name="Mohammed S."/>
        </authorList>
    </citation>
    <scope>PHOSPHORYLATION [LARGE SCALE ANALYSIS] AT SER-334 AND THR-516</scope>
    <scope>IDENTIFICATION BY MASS SPECTROMETRY [LARGE SCALE ANALYSIS]</scope>
    <source>
        <tissue>Erythroleukemia</tissue>
    </source>
</reference>
<feature type="chain" id="PRO_0000098722" description="Lateral signaling target protein 2 homolog">
    <location>
        <begin position="1"/>
        <end position="887"/>
    </location>
</feature>
<feature type="zinc finger region" description="FYVE-type" evidence="1">
    <location>
        <begin position="817"/>
        <end position="879"/>
    </location>
</feature>
<feature type="region of interest" description="Disordered" evidence="2">
    <location>
        <begin position="308"/>
        <end position="327"/>
    </location>
</feature>
<feature type="region of interest" description="Disordered" evidence="2">
    <location>
        <begin position="354"/>
        <end position="396"/>
    </location>
</feature>
<feature type="region of interest" description="Disordered" evidence="2">
    <location>
        <begin position="412"/>
        <end position="474"/>
    </location>
</feature>
<feature type="region of interest" description="Disordered" evidence="2">
    <location>
        <begin position="599"/>
        <end position="714"/>
    </location>
</feature>
<feature type="compositionally biased region" description="Basic and acidic residues" evidence="2">
    <location>
        <begin position="602"/>
        <end position="612"/>
    </location>
</feature>
<feature type="compositionally biased region" description="Polar residues" evidence="2">
    <location>
        <begin position="638"/>
        <end position="648"/>
    </location>
</feature>
<feature type="compositionally biased region" description="Low complexity" evidence="2">
    <location>
        <begin position="681"/>
        <end position="693"/>
    </location>
</feature>
<feature type="compositionally biased region" description="Low complexity" evidence="2">
    <location>
        <begin position="700"/>
        <end position="711"/>
    </location>
</feature>
<feature type="binding site" evidence="1">
    <location>
        <position position="823"/>
    </location>
    <ligand>
        <name>Zn(2+)</name>
        <dbReference type="ChEBI" id="CHEBI:29105"/>
        <label>1</label>
    </ligand>
</feature>
<feature type="binding site" evidence="1">
    <location>
        <position position="826"/>
    </location>
    <ligand>
        <name>Zn(2+)</name>
        <dbReference type="ChEBI" id="CHEBI:29105"/>
        <label>1</label>
    </ligand>
</feature>
<feature type="binding site" evidence="1">
    <location>
        <position position="839"/>
    </location>
    <ligand>
        <name>Zn(2+)</name>
        <dbReference type="ChEBI" id="CHEBI:29105"/>
        <label>2</label>
    </ligand>
</feature>
<feature type="binding site" evidence="1">
    <location>
        <position position="842"/>
    </location>
    <ligand>
        <name>Zn(2+)</name>
        <dbReference type="ChEBI" id="CHEBI:29105"/>
        <label>2</label>
    </ligand>
</feature>
<feature type="binding site" evidence="1">
    <location>
        <position position="847"/>
    </location>
    <ligand>
        <name>Zn(2+)</name>
        <dbReference type="ChEBI" id="CHEBI:29105"/>
        <label>1</label>
    </ligand>
</feature>
<feature type="binding site" evidence="1">
    <location>
        <position position="850"/>
    </location>
    <ligand>
        <name>Zn(2+)</name>
        <dbReference type="ChEBI" id="CHEBI:29105"/>
        <label>1</label>
    </ligand>
</feature>
<feature type="binding site" evidence="1">
    <location>
        <position position="869"/>
    </location>
    <ligand>
        <name>Zn(2+)</name>
        <dbReference type="ChEBI" id="CHEBI:29105"/>
        <label>2</label>
    </ligand>
</feature>
<feature type="binding site" evidence="1">
    <location>
        <position position="872"/>
    </location>
    <ligand>
        <name>Zn(2+)</name>
        <dbReference type="ChEBI" id="CHEBI:29105"/>
        <label>2</label>
    </ligand>
</feature>
<feature type="modified residue" description="Phosphoserine" evidence="10">
    <location>
        <position position="334"/>
    </location>
</feature>
<feature type="modified residue" description="Phosphothreonine" evidence="10">
    <location>
        <position position="516"/>
    </location>
</feature>
<feature type="modified residue" description="Phosphoserine; by MAP2K" evidence="6">
    <location>
        <position position="586"/>
    </location>
</feature>
<feature type="modified residue" description="Phosphothreonine; by MAP2K" evidence="6">
    <location>
        <position position="870"/>
    </location>
</feature>
<feature type="cross-link" description="Glycyl lysine isopeptide (Lys-Gly) (interchain with G-Cter in ubiquitin)" evidence="6">
    <location>
        <position position="87"/>
    </location>
</feature>
<feature type="splice variant" id="VSP_037614" description="In isoform 5." evidence="7">
    <location>
        <begin position="1"/>
        <end position="114"/>
    </location>
</feature>
<feature type="splice variant" id="VSP_037615" description="In isoform 3, isoform 4 and isoform 8." evidence="7 8">
    <location>
        <begin position="1"/>
        <end position="70"/>
    </location>
</feature>
<feature type="splice variant" id="VSP_046092" description="In isoform 7." evidence="8">
    <location>
        <begin position="14"/>
        <end position="60"/>
    </location>
</feature>
<feature type="splice variant" id="VSP_037616" description="In isoform 2 and isoform 4." evidence="7">
    <original>RALDFGYLTQDMIDDYEPALMFSIPRLAIVC</original>
    <variation>S</variation>
    <location>
        <begin position="204"/>
        <end position="234"/>
    </location>
</feature>
<feature type="splice variant" id="VSP_046093" description="In isoform 7." evidence="8">
    <original>ALDFGYLTQDMIDDY</original>
    <variation>NGKGVLKFMWNCNGP</variation>
    <location>
        <begin position="205"/>
        <end position="219"/>
    </location>
</feature>
<feature type="splice variant" id="VSP_046094" description="In isoform 7." evidence="8">
    <location>
        <begin position="220"/>
        <end position="887"/>
    </location>
</feature>
<feature type="splice variant" id="VSP_046379" description="In isoform 8." evidence="8">
    <location>
        <begin position="234"/>
        <end position="887"/>
    </location>
</feature>
<feature type="splice variant" id="VSP_045805" description="In isoform 6." evidence="8">
    <original>GLVVYADGPLNLDRKVEDMSELFRPFHTLLRKIRDLLQTLTEEELHTLERNLC</original>
    <variation>PLLPAHPRTRAGATAHVACRMVAGSSSGALTHPPVSKQGVISALLRPLPELPP</variation>
    <location>
        <begin position="235"/>
        <end position="287"/>
    </location>
</feature>
<feature type="splice variant" id="VSP_045806" description="In isoform 6." evidence="8">
    <location>
        <begin position="288"/>
        <end position="887"/>
    </location>
</feature>
<feature type="sequence variant" id="VAR_052988" description="In dbSNP:rs17768776." evidence="4">
    <original>S</original>
    <variation>N</variation>
    <location>
        <position position="603"/>
    </location>
</feature>
<feature type="sequence variant" id="VAR_052989" description="In dbSNP:rs661301." evidence="3 4 5">
    <original>S</original>
    <variation>P</variation>
    <location>
        <position position="672"/>
    </location>
</feature>
<feature type="mutagenesis site" description="Abolishes monoubiquitination and promotes localization to early endosomes." evidence="6">
    <original>K</original>
    <variation>R</variation>
    <location>
        <position position="87"/>
    </location>
</feature>
<feature type="mutagenesis site" description="Abolishes binding to phosphatidylinositol 3-phosphate (PI3P)." evidence="6">
    <original>C</original>
    <variation>A</variation>
    <location>
        <position position="823"/>
    </location>
</feature>
<feature type="sequence conflict" description="In Ref. 2; BAG54362." evidence="9" ref="2">
    <original>M</original>
    <variation>I</variation>
    <location>
        <position position="157"/>
    </location>
</feature>
<feature type="sequence conflict" description="In Ref. 2; BAH14855." evidence="9" ref="2">
    <original>L</original>
    <variation>P</variation>
    <location>
        <position position="306"/>
    </location>
</feature>
<feature type="sequence conflict" description="In Ref. 2; BAH11855." evidence="9" ref="2">
    <original>M</original>
    <variation>I</variation>
    <location>
        <position position="335"/>
    </location>
</feature>
<feature type="sequence conflict" description="In Ref. 2; BAG54362." evidence="9" ref="2">
    <original>E</original>
    <variation>G</variation>
    <location>
        <position position="341"/>
    </location>
</feature>
<feature type="sequence conflict" description="In Ref. 2; BAH14855." evidence="9" ref="2">
    <original>E</original>
    <variation>D</variation>
    <location>
        <position position="453"/>
    </location>
</feature>
<feature type="sequence conflict" description="In Ref. 2; BAG54362." evidence="9" ref="2">
    <original>A</original>
    <variation>G</variation>
    <location>
        <position position="679"/>
    </location>
</feature>
<feature type="sequence conflict" description="In Ref. 2; BAH11855." evidence="9" ref="2">
    <original>A</original>
    <variation>P</variation>
    <location>
        <position position="700"/>
    </location>
</feature>
<accession>Q9HCC9</accession>
<accession>B2RP83</accession>
<accession>B3KX50</accession>
<accession>B7Z1Q7</accession>
<accession>B7Z2G9</accession>
<accession>B7Z2M2</accession>
<accession>B7ZB19</accession>
<accession>E9PB54</accession>
<accession>E9PB64</accession>
<accession>E9PG77</accession>
<accession>Q7Z6J3</accession>
<proteinExistence type="evidence at protein level"/>